<sequence length="1430" mass="159610">MAPAIDSTVNDLQPNTPNPEKALSSQAQAFVRAYSEDGDSGGQSVLGAEDPLSPLNPRGERFNARAWAKNLAAVTRERGEGFRQVGISFQNVNVFGYGTPTDFQKNVGNVWLALPAMIRQLFAPKGGQTRIDILNHFNGLVRPGEMCVVLGPPGSGCSTFLKTISGHTSGLHVNPDAHFNYQGLSAKEMITAHRGDCIYTAEVDVHFPMLTVGETLTFAARARSQQHLPEGISRNNYCDQLRDVIMAMYGIRHTIHTKVGDDFVRGVSGGERKRVSVAEATLANAPFQCWDNSTRGLDSANAIEFCRTLRLQSEIFGQTCVVSMYQAPQTAYDLFDKVLLIYEGRQIYFGSTSKAKDYFVNLGFECPARQTTPDFLTSITFPAERIPRPDCQPPRTPDEFSQVWKNSLECKALQDEINEYNMEHPINGPDADTFRQLKQASQAQGQKVTSPFTLTYSQQVKLCMWRGWARFKADPWPAVWVMVGNTIMALIMSSLFYNMGQDTNSFYGRSVVLFMAILFNAFSSILEVMTLYAQRPIVEKQSRYAFYHPSAEAYASVLVDMPMKITSTISFNLVFYFMTNLNRAPGNFFFYLLVVFLIVLAMSGVFRFIGSLSRTEQQAMVPASVLMLALLIFTGFVVPVDYMLPWCRWINYVNPVAYGYEALMVNEFHGREFTCSTYIPEYANATSGTGACSVVGATPGNLFWRNVGIIIAMVIFNYLMYFIASEYVTAKKSRGEILVFRRGHTPSIPAKGSGDLEKLESGHATTVLERSDPSMVHKGEGFQGSVSVFHWNNVCYDLEIKGKPRRILDNVDGWIKPGTLTALMGVSGAGKTTLLDCLANRRVGVGIVTGEMLVDGKVCDQSFQRKTGYAQQQDLHLETSTVREALTFSAFLRQPHSIPKADKLTYVEEVIKLLAMQDYADAVVGVIGEGLNVEQRKRLTLGVELVAKPPLLLFVDEPTSGLDSQTSWAVLDLLEKLSKAGQSILCTIHQPSAMLFQRFDRLLFLAEGGKPVYFGEIGNDSSTLIDYFERNGAKPCLPGSNPAEWMLEAVGAAPSISSEGDWPEIWRSSPEYQSVHHELARLKAVDIDQLSADKPDPTSYNEFAAPLWQQLVVVTQRAFLQSWRSPSYIYSKITLCIATSLFIGLVFFNAPLSIQGLQNQMFAIFEVMSIVGQLVDQQMPNFLTQRSLYEVRERPAKTYSWMVFMLSQIVTELPWSTLASVFMWALFYYPIGFHKNAQAAGQGTERGALMWLLFWQFLVWVSTFTHMCISFVDSADDGGNIANFLFVLAFFFCGVLASPSQMPRFWIFLYRASPLSYWVSAVLSTGFANVQVTCTDKEYTAFDPPKGSTCGEYMAEYISRAGGYVKDPQATESCGYCTIKDTNVFLAAVSSDYDTRWRNFGILWVYIGFNIAAALALYWIARMPKGKKRL</sequence>
<accession>A0A4P8GG95</accession>
<dbReference type="EMBL" id="MK400120">
    <property type="protein sequence ID" value="QCO93116.1"/>
    <property type="molecule type" value="Genomic_DNA"/>
</dbReference>
<dbReference type="SMR" id="A0A4P8GG95"/>
<dbReference type="GlyCosmos" id="A0A4P8GG95">
    <property type="glycosylation" value="3 sites, No reported glycans"/>
</dbReference>
<dbReference type="GO" id="GO:0005886">
    <property type="term" value="C:plasma membrane"/>
    <property type="evidence" value="ECO:0007669"/>
    <property type="project" value="UniProtKB-SubCell"/>
</dbReference>
<dbReference type="GO" id="GO:0140359">
    <property type="term" value="F:ABC-type transporter activity"/>
    <property type="evidence" value="ECO:0007669"/>
    <property type="project" value="InterPro"/>
</dbReference>
<dbReference type="GO" id="GO:0005524">
    <property type="term" value="F:ATP binding"/>
    <property type="evidence" value="ECO:0007669"/>
    <property type="project" value="UniProtKB-KW"/>
</dbReference>
<dbReference type="GO" id="GO:0016887">
    <property type="term" value="F:ATP hydrolysis activity"/>
    <property type="evidence" value="ECO:0007669"/>
    <property type="project" value="InterPro"/>
</dbReference>
<dbReference type="CDD" id="cd03233">
    <property type="entry name" value="ABCG_PDR_domain1"/>
    <property type="match status" value="1"/>
</dbReference>
<dbReference type="CDD" id="cd03232">
    <property type="entry name" value="ABCG_PDR_domain2"/>
    <property type="match status" value="1"/>
</dbReference>
<dbReference type="FunFam" id="3.40.50.300:FF:000054">
    <property type="entry name" value="ABC multidrug transporter atrF"/>
    <property type="match status" value="1"/>
</dbReference>
<dbReference type="Gene3D" id="3.40.50.300">
    <property type="entry name" value="P-loop containing nucleotide triphosphate hydrolases"/>
    <property type="match status" value="2"/>
</dbReference>
<dbReference type="InterPro" id="IPR003593">
    <property type="entry name" value="AAA+_ATPase"/>
</dbReference>
<dbReference type="InterPro" id="IPR013525">
    <property type="entry name" value="ABC2_TM"/>
</dbReference>
<dbReference type="InterPro" id="IPR029481">
    <property type="entry name" value="ABC_trans_N"/>
</dbReference>
<dbReference type="InterPro" id="IPR003439">
    <property type="entry name" value="ABC_transporter-like_ATP-bd"/>
</dbReference>
<dbReference type="InterPro" id="IPR017871">
    <property type="entry name" value="ABC_transporter-like_CS"/>
</dbReference>
<dbReference type="InterPro" id="IPR043926">
    <property type="entry name" value="ABCG_dom"/>
</dbReference>
<dbReference type="InterPro" id="IPR034001">
    <property type="entry name" value="ABCG_PDR_1"/>
</dbReference>
<dbReference type="InterPro" id="IPR034003">
    <property type="entry name" value="ABCG_PDR_2"/>
</dbReference>
<dbReference type="InterPro" id="IPR027417">
    <property type="entry name" value="P-loop_NTPase"/>
</dbReference>
<dbReference type="InterPro" id="IPR010929">
    <property type="entry name" value="PDR_CDR_ABC"/>
</dbReference>
<dbReference type="PANTHER" id="PTHR19241">
    <property type="entry name" value="ATP-BINDING CASSETTE TRANSPORTER"/>
    <property type="match status" value="1"/>
</dbReference>
<dbReference type="Pfam" id="PF01061">
    <property type="entry name" value="ABC2_membrane"/>
    <property type="match status" value="2"/>
</dbReference>
<dbReference type="Pfam" id="PF19055">
    <property type="entry name" value="ABC2_membrane_7"/>
    <property type="match status" value="1"/>
</dbReference>
<dbReference type="Pfam" id="PF00005">
    <property type="entry name" value="ABC_tran"/>
    <property type="match status" value="2"/>
</dbReference>
<dbReference type="Pfam" id="PF14510">
    <property type="entry name" value="ABC_trans_N"/>
    <property type="match status" value="1"/>
</dbReference>
<dbReference type="Pfam" id="PF06422">
    <property type="entry name" value="PDR_CDR"/>
    <property type="match status" value="1"/>
</dbReference>
<dbReference type="SMART" id="SM00382">
    <property type="entry name" value="AAA"/>
    <property type="match status" value="2"/>
</dbReference>
<dbReference type="SUPFAM" id="SSF52540">
    <property type="entry name" value="P-loop containing nucleoside triphosphate hydrolases"/>
    <property type="match status" value="2"/>
</dbReference>
<dbReference type="PROSITE" id="PS00211">
    <property type="entry name" value="ABC_TRANSPORTER_1"/>
    <property type="match status" value="1"/>
</dbReference>
<dbReference type="PROSITE" id="PS50893">
    <property type="entry name" value="ABC_TRANSPORTER_2"/>
    <property type="match status" value="2"/>
</dbReference>
<protein>
    <recommendedName>
        <fullName evidence="9">ABC transporter eupT</fullName>
    </recommendedName>
    <alternativeName>
        <fullName evidence="9">Eupenifeldin biosynthesis cluster protein T</fullName>
    </alternativeName>
</protein>
<keyword id="KW-0067">ATP-binding</keyword>
<keyword id="KW-1003">Cell membrane</keyword>
<keyword id="KW-0325">Glycoprotein</keyword>
<keyword id="KW-0472">Membrane</keyword>
<keyword id="KW-0547">Nucleotide-binding</keyword>
<keyword id="KW-0677">Repeat</keyword>
<keyword id="KW-0812">Transmembrane</keyword>
<keyword id="KW-1133">Transmembrane helix</keyword>
<keyword id="KW-0813">Transport</keyword>
<name>EUPT_PHOSX</name>
<proteinExistence type="evidence at protein level"/>
<feature type="chain" id="PRO_0000449159" description="ABC transporter eupT">
    <location>
        <begin position="1"/>
        <end position="1430"/>
    </location>
</feature>
<feature type="transmembrane region" description="Helical" evidence="1">
    <location>
        <begin position="476"/>
        <end position="496"/>
    </location>
</feature>
<feature type="transmembrane region" description="Helical" evidence="1">
    <location>
        <begin position="511"/>
        <end position="531"/>
    </location>
</feature>
<feature type="transmembrane region" description="Helical" evidence="1">
    <location>
        <begin position="557"/>
        <end position="577"/>
    </location>
</feature>
<feature type="transmembrane region" description="Helical" evidence="1">
    <location>
        <begin position="586"/>
        <end position="606"/>
    </location>
</feature>
<feature type="transmembrane region" description="Helical" evidence="1">
    <location>
        <begin position="620"/>
        <end position="640"/>
    </location>
</feature>
<feature type="transmembrane region" description="Helical" evidence="1">
    <location>
        <begin position="707"/>
        <end position="727"/>
    </location>
</feature>
<feature type="transmembrane region" description="Helical" evidence="1">
    <location>
        <begin position="1133"/>
        <end position="1153"/>
    </location>
</feature>
<feature type="transmembrane region" description="Helical" evidence="1">
    <location>
        <begin position="1213"/>
        <end position="1233"/>
    </location>
</feature>
<feature type="transmembrane region" description="Helical" evidence="1">
    <location>
        <begin position="1249"/>
        <end position="1269"/>
    </location>
</feature>
<feature type="transmembrane region" description="Helical" evidence="1">
    <location>
        <begin position="1278"/>
        <end position="1298"/>
    </location>
</feature>
<feature type="transmembrane region" description="Helical" evidence="1">
    <location>
        <begin position="1305"/>
        <end position="1325"/>
    </location>
</feature>
<feature type="transmembrane region" description="Helical" evidence="1">
    <location>
        <begin position="1400"/>
        <end position="1420"/>
    </location>
</feature>
<feature type="domain" description="ABC transporter 1" evidence="2">
    <location>
        <begin position="112"/>
        <end position="368"/>
    </location>
</feature>
<feature type="domain" description="ABC transporter 2" evidence="2">
    <location>
        <begin position="789"/>
        <end position="1032"/>
    </location>
</feature>
<feature type="region of interest" description="Disordered" evidence="4">
    <location>
        <begin position="1"/>
        <end position="26"/>
    </location>
</feature>
<feature type="binding site" evidence="2">
    <location>
        <begin position="825"/>
        <end position="832"/>
    </location>
    <ligand>
        <name>ATP</name>
        <dbReference type="ChEBI" id="CHEBI:30616"/>
    </ligand>
</feature>
<feature type="glycosylation site" description="N-linked (GlcNAc...) asparagine" evidence="3">
    <location>
        <position position="292"/>
    </location>
</feature>
<feature type="glycosylation site" description="N-linked (GlcNAc...) asparagine" evidence="3">
    <location>
        <position position="684"/>
    </location>
</feature>
<feature type="glycosylation site" description="N-linked (GlcNAc...) asparagine" evidence="3">
    <location>
        <position position="1019"/>
    </location>
</feature>
<reference key="1">
    <citation type="journal article" date="2019" name="Fungal Genet. Biol.">
        <title>Identification of the gene cluster for bistropolone-humulene meroterpenoid biosynthesis in Phoma sp.</title>
        <authorList>
            <person name="Zhai Y."/>
            <person name="Li Y."/>
            <person name="Zhang J."/>
            <person name="Zhang Y."/>
            <person name="Ren F."/>
            <person name="Zhang X."/>
            <person name="Liu G."/>
            <person name="Liu X."/>
            <person name="Che Y."/>
        </authorList>
    </citation>
    <scope>NUCLEOTIDE SEQUENCE [GENOMIC DNA]</scope>
    <scope>FUNCTION</scope>
    <scope>DISRUPTION PHENOTYPE</scope>
    <scope>PATHWAY</scope>
    <source>
        <strain>XZ068 / CGMCC No. 10481</strain>
    </source>
</reference>
<reference key="2">
    <citation type="journal article" date="1993" name="J. Antibiot.">
        <title>Eupenifeldin, a novel cytotoxic bistropolone from Eupenicillium brefeldianum.</title>
        <authorList>
            <person name="Mayerl F."/>
            <person name="Gao Q."/>
            <person name="Huang S."/>
            <person name="Klohr S.E."/>
            <person name="Matson J.A."/>
            <person name="Gustavson D.R."/>
            <person name="Pirnik D.M."/>
            <person name="Berry R.L."/>
            <person name="Fairchild C."/>
            <person name="Rose W.C."/>
        </authorList>
    </citation>
    <scope>BIOTECHNOLOGY</scope>
</reference>
<reference key="3">
    <citation type="journal article" date="2008" name="J. Nat. Prod.">
        <title>Noreupenifeldin, a tropolone from an unidentified ascomycete.</title>
        <authorList>
            <person name="Ayers S."/>
            <person name="Zink D.L."/>
            <person name="Powell J.S."/>
            <person name="Brown C.M."/>
            <person name="Grund A."/>
            <person name="Bills G.F."/>
            <person name="Platas G."/>
            <person name="Thompson D."/>
            <person name="Singh S.B."/>
        </authorList>
    </citation>
    <scope>BIOTECHNOLOGY</scope>
</reference>
<reference key="4">
    <citation type="journal article" date="2008" name="Phytochem. Lett.">
        <title>Ramiferin, a bisphenol-sesquiterpene from the fungus Kionochaeta ramifera BCC 7585.</title>
        <authorList>
            <person name="Bunyapaiboonsri T."/>
            <person name="Veeranondha S."/>
            <person name="Boonruangprapa T."/>
            <person name="Somrithipol S."/>
        </authorList>
    </citation>
    <scope>BIOTECHNOLOGY</scope>
</reference>
<comment type="function">
    <text evidence="11">ABC transporter; part of the gene cluster that mediates the biosynthesis of eupenifeldin, a bistropolone meroterpenoid that acts as an antitumor agent.</text>
</comment>
<comment type="subcellular location">
    <subcellularLocation>
        <location evidence="10">Cell membrane</location>
        <topology evidence="1">Multi-pass membrane protein</topology>
    </subcellularLocation>
</comment>
<comment type="disruption phenotype">
    <text evidence="6">Abolishes the production of eupenifeldin.</text>
</comment>
<comment type="biotechnology">
    <text evidence="5 7 8">Eupenifeldin is a bistropolone-humulene meroterpenoid first discovered as an antitumor and anti-leukemia agent (PubMed:8360103). This metabolite also shows anthelmintic activity against the parasitic worm Hemonchus contortus, anti-malarial activity as well as antifungal activity (PubMed:18095654, Ref.4).</text>
</comment>
<comment type="similarity">
    <text evidence="10">Belongs to the ABC transporter superfamily. ABCG family. PDR (TC 3.A.1.205) subfamily.</text>
</comment>
<gene>
    <name evidence="9" type="primary">eupT</name>
    <name type="ORF">gme12638</name>
</gene>
<evidence type="ECO:0000255" key="1"/>
<evidence type="ECO:0000255" key="2">
    <source>
        <dbReference type="PROSITE-ProRule" id="PRU00434"/>
    </source>
</evidence>
<evidence type="ECO:0000255" key="3">
    <source>
        <dbReference type="PROSITE-ProRule" id="PRU00498"/>
    </source>
</evidence>
<evidence type="ECO:0000256" key="4">
    <source>
        <dbReference type="SAM" id="MobiDB-lite"/>
    </source>
</evidence>
<evidence type="ECO:0000269" key="5">
    <source>
    </source>
</evidence>
<evidence type="ECO:0000269" key="6">
    <source>
    </source>
</evidence>
<evidence type="ECO:0000269" key="7">
    <source>
    </source>
</evidence>
<evidence type="ECO:0000269" key="8">
    <source ref="4"/>
</evidence>
<evidence type="ECO:0000303" key="9">
    <source>
    </source>
</evidence>
<evidence type="ECO:0000305" key="10"/>
<evidence type="ECO:0000305" key="11">
    <source>
    </source>
</evidence>
<organism>
    <name type="scientific">Phoma sp</name>
    <dbReference type="NCBI Taxonomy" id="1707701"/>
    <lineage>
        <taxon>Eukaryota</taxon>
        <taxon>Fungi</taxon>
        <taxon>Dikarya</taxon>
        <taxon>Ascomycota</taxon>
        <taxon>Pezizomycotina</taxon>
        <taxon>Dothideomycetes</taxon>
        <taxon>Pleosporomycetidae</taxon>
        <taxon>Pleosporales</taxon>
        <taxon>Pleosporineae</taxon>
        <taxon>Didymellaceae</taxon>
        <taxon>Phoma</taxon>
    </lineage>
</organism>